<sequence>MAESWQDCPALGPGWKRRESFRKSGASFGRSDIYYQSPTGEKIRSKVELTRYLGPACDLTLFDFRQGTLCHPIPKTHPLAVPSKKKKKPSKPAKTKKQQVGLQRSEVRIETPQGEYKAPTATALASLSVSASASSSASASASASSHAPVCCENCGIHFSWDGVKRQRLKTLCKDCRAQRIAFNREQRMFKRVGCGDCAACLVKEDCGVCSTCRLQLPSDVASGLYCKCERRRCLRIMEKSRGCGVCRGCQTQEDCGHCCICLRSPRPGLKRQWRCLQRRCFWGKRDSSKRGSKVASQRHSQAPPLPPHPASQYTEPTELHISDIAPTSPAEFIYYCVDEDEDELQPYTNQRQNRKCGACAACLRRMDCGRCDFCCDKPKFGGGNQKRQKCRWRQCLQFAMKRLLPSAGSGSGEGAGLRPYQTHQTHQKRPASARQLQLSSPLKAPWAVVTAPPGPVRDSRKQQAGRGSVLPQPDTDFVFLQEGTSSAMQMPGTAAASTEVPVQAAQCSAPSWVVALPQVKQETADAPEEWTAVTTFLTSSTLQSGFPSKAADPDLSPVKQEPPGPEEDGEEKKDDVSETTPAEEIGGVGTPVITEIFSLGGTRLRDAEAWLPRLHKLLAVNEKEYFTELQLKEEVL</sequence>
<proteinExistence type="evidence at protein level"/>
<gene>
    <name evidence="13" type="primary">Mbd1</name>
</gene>
<name>MBD1_MOUSE</name>
<organism>
    <name type="scientific">Mus musculus</name>
    <name type="common">Mouse</name>
    <dbReference type="NCBI Taxonomy" id="10090"/>
    <lineage>
        <taxon>Eukaryota</taxon>
        <taxon>Metazoa</taxon>
        <taxon>Chordata</taxon>
        <taxon>Craniata</taxon>
        <taxon>Vertebrata</taxon>
        <taxon>Euteleostomi</taxon>
        <taxon>Mammalia</taxon>
        <taxon>Eutheria</taxon>
        <taxon>Euarchontoglires</taxon>
        <taxon>Glires</taxon>
        <taxon>Rodentia</taxon>
        <taxon>Myomorpha</taxon>
        <taxon>Muroidea</taxon>
        <taxon>Muridae</taxon>
        <taxon>Murinae</taxon>
        <taxon>Mus</taxon>
        <taxon>Mus</taxon>
    </lineage>
</organism>
<evidence type="ECO:0000250" key="1"/>
<evidence type="ECO:0000250" key="2">
    <source>
        <dbReference type="UniProtKB" id="Q9UIS9"/>
    </source>
</evidence>
<evidence type="ECO:0000255" key="3"/>
<evidence type="ECO:0000255" key="4">
    <source>
        <dbReference type="PROSITE-ProRule" id="PRU00338"/>
    </source>
</evidence>
<evidence type="ECO:0000255" key="5">
    <source>
        <dbReference type="PROSITE-ProRule" id="PRU00509"/>
    </source>
</evidence>
<evidence type="ECO:0000256" key="6">
    <source>
        <dbReference type="SAM" id="MobiDB-lite"/>
    </source>
</evidence>
<evidence type="ECO:0000269" key="7">
    <source>
    </source>
</evidence>
<evidence type="ECO:0000269" key="8">
    <source>
    </source>
</evidence>
<evidence type="ECO:0000269" key="9">
    <source>
    </source>
</evidence>
<evidence type="ECO:0000303" key="10">
    <source>
    </source>
</evidence>
<evidence type="ECO:0000303" key="11">
    <source>
    </source>
</evidence>
<evidence type="ECO:0000305" key="12"/>
<evidence type="ECO:0000312" key="13">
    <source>
        <dbReference type="MGI" id="MGI:1333811"/>
    </source>
</evidence>
<protein>
    <recommendedName>
        <fullName evidence="12">Methyl-CpG-binding domain protein 1</fullName>
    </recommendedName>
    <alternativeName>
        <fullName>Methyl-CpG-binding protein MBD1</fullName>
    </alternativeName>
</protein>
<comment type="function">
    <text evidence="7 9">Transcriptional repressor that binds CpG islands in promoters where the DNA is methylated at position 5 of cytosine within CpG dinucleotides. Binding is abolished by the presence of 7-mG that is produced by DNA damage by methylmethanesulfonate (MMS). Acts as transcriptional repressor and plays a role in gene silencing by recruiting ATF7IP, which in turn recruits factors such as the histone methyltransferase SETDB1. Probably forms a complex with SETDB1 and ATF7IP that represses transcription and couples DNA methylation and histone 'Lys-9' trimethylation. Isoform 1 can also repress transcription from unmethylated promoters.</text>
</comment>
<comment type="subunit">
    <text evidence="1">Interacts with OASL, ATF7IP, ATF7IP2 and BAHD1. Binds CHAF1A and the SUV39H1-CBX5 complex via the MBD domain. Binds MGP via the TRD domain. May be part of the MeCP1 complex. During DNA replication, it recruits SETDB1 to form a S phase-specific complex that facilitates methylation of H3 'Lys-9' during replication-coupled chromatin assembly and is at least composed of the CAF-1 subunit CHAF1A, MBD1 and SETDB1 (By similarity).</text>
</comment>
<comment type="subunit">
    <molecule>Isoform 2</molecule>
    <text evidence="8">Interacts with the Ten-1 ICD form of TENM1.</text>
</comment>
<comment type="subcellular location">
    <subcellularLocation>
        <location>Nucleus</location>
    </subcellularLocation>
    <subcellularLocation>
        <location>Nucleus matrix</location>
    </subcellularLocation>
    <subcellularLocation>
        <location>Nucleus speckle</location>
    </subcellularLocation>
    <subcellularLocation>
        <location>Chromosome</location>
    </subcellularLocation>
    <text>Nuclear, in a punctate pattern. Associated with euchromatic regions of the chromosomes. Colocalizes with the Ten-1 ICD form of TENM1 in foci associated with the nuclear matrix.</text>
</comment>
<comment type="alternative products">
    <event type="alternative splicing"/>
    <isoform>
        <id>Q9Z2E2-1</id>
        <name>1</name>
        <name>MBD1a</name>
        <sequence type="displayed"/>
    </isoform>
    <isoform>
        <id>Q9Z2E2-2</id>
        <name>2</name>
        <name>MBD1b</name>
        <sequence type="described" ref="VSP_011072 VSP_011073"/>
    </isoform>
    <isoform>
        <id>Q9Z2E2-3</id>
        <name>3</name>
        <name>MBD1d</name>
        <sequence type="described" ref="VSP_011072 VSP_011073 VSP_011074 VSP_011075"/>
    </isoform>
    <isoform>
        <id>Q9Z2E2-4</id>
        <name>4</name>
        <sequence type="described" ref="VSP_011073"/>
    </isoform>
    <isoform>
        <id>Q9Z2E2-5</id>
        <name>5</name>
        <sequence type="described" ref="VSP_011073 VSP_011074 VSP_011075"/>
    </isoform>
</comment>
<comment type="tissue specificity">
    <text evidence="9">Highly expressed in kidney, liver and brain. Detected at lower levels in heart, lung, skeletal muscle, spleen and testis.</text>
</comment>
<comment type="domain">
    <text evidence="2">The methyl-CpG-binding domain (MBD) functions both in binding to methylated DNA and in protein interactions.</text>
</comment>
<comment type="domain">
    <text evidence="2">The third CXXC-type zinc finger mediates binding to DNA containing unmethylated CpG dinucleotides.</text>
</comment>
<comment type="domain">
    <text evidence="2">The transcriptional repression domain (TRD) is involved in transcription repression and in protein interactions.</text>
</comment>
<comment type="PTM">
    <text evidence="2">Sumoylated, sumoylation may increase interaction with ATF7IP.</text>
</comment>
<reference key="1">
    <citation type="journal article" date="1998" name="Mol. Cell. Biol.">
        <title>Identification and characterization of a family of mammalian methyl-CpG binding proteins.</title>
        <authorList>
            <person name="Hendrich B."/>
            <person name="Bird A."/>
        </authorList>
    </citation>
    <scope>NUCLEOTIDE SEQUENCE [MRNA] (ISOFORM 1)</scope>
    <scope>FUNCTION</scope>
    <scope>TISSUE SPECIFICITY</scope>
    <source>
        <strain>C57BL/6J</strain>
        <tissue>Brain</tissue>
    </source>
</reference>
<reference key="2">
    <citation type="journal article" date="1999" name="Mamm. Genome">
        <title>Genomic structure and chromosomal mapping of the murine and human mbd1, mbd2, mbd3, and mbd4 genes.</title>
        <authorList>
            <person name="Hendrich B."/>
            <person name="Abbott C."/>
            <person name="McQueen H."/>
            <person name="Chambers D."/>
            <person name="Cross S.H."/>
            <person name="Bird A."/>
        </authorList>
    </citation>
    <scope>NUCLEOTIDE SEQUENCE [GENOMIC DNA]</scope>
    <source>
        <strain>129</strain>
    </source>
</reference>
<reference key="3">
    <citation type="journal article" date="2005" name="Science">
        <title>The transcriptional landscape of the mammalian genome.</title>
        <authorList>
            <person name="Carninci P."/>
            <person name="Kasukawa T."/>
            <person name="Katayama S."/>
            <person name="Gough J."/>
            <person name="Frith M.C."/>
            <person name="Maeda N."/>
            <person name="Oyama R."/>
            <person name="Ravasi T."/>
            <person name="Lenhard B."/>
            <person name="Wells C."/>
            <person name="Kodzius R."/>
            <person name="Shimokawa K."/>
            <person name="Bajic V.B."/>
            <person name="Brenner S.E."/>
            <person name="Batalov S."/>
            <person name="Forrest A.R."/>
            <person name="Zavolan M."/>
            <person name="Davis M.J."/>
            <person name="Wilming L.G."/>
            <person name="Aidinis V."/>
            <person name="Allen J.E."/>
            <person name="Ambesi-Impiombato A."/>
            <person name="Apweiler R."/>
            <person name="Aturaliya R.N."/>
            <person name="Bailey T.L."/>
            <person name="Bansal M."/>
            <person name="Baxter L."/>
            <person name="Beisel K.W."/>
            <person name="Bersano T."/>
            <person name="Bono H."/>
            <person name="Chalk A.M."/>
            <person name="Chiu K.P."/>
            <person name="Choudhary V."/>
            <person name="Christoffels A."/>
            <person name="Clutterbuck D.R."/>
            <person name="Crowe M.L."/>
            <person name="Dalla E."/>
            <person name="Dalrymple B.P."/>
            <person name="de Bono B."/>
            <person name="Della Gatta G."/>
            <person name="di Bernardo D."/>
            <person name="Down T."/>
            <person name="Engstrom P."/>
            <person name="Fagiolini M."/>
            <person name="Faulkner G."/>
            <person name="Fletcher C.F."/>
            <person name="Fukushima T."/>
            <person name="Furuno M."/>
            <person name="Futaki S."/>
            <person name="Gariboldi M."/>
            <person name="Georgii-Hemming P."/>
            <person name="Gingeras T.R."/>
            <person name="Gojobori T."/>
            <person name="Green R.E."/>
            <person name="Gustincich S."/>
            <person name="Harbers M."/>
            <person name="Hayashi Y."/>
            <person name="Hensch T.K."/>
            <person name="Hirokawa N."/>
            <person name="Hill D."/>
            <person name="Huminiecki L."/>
            <person name="Iacono M."/>
            <person name="Ikeo K."/>
            <person name="Iwama A."/>
            <person name="Ishikawa T."/>
            <person name="Jakt M."/>
            <person name="Kanapin A."/>
            <person name="Katoh M."/>
            <person name="Kawasawa Y."/>
            <person name="Kelso J."/>
            <person name="Kitamura H."/>
            <person name="Kitano H."/>
            <person name="Kollias G."/>
            <person name="Krishnan S.P."/>
            <person name="Kruger A."/>
            <person name="Kummerfeld S.K."/>
            <person name="Kurochkin I.V."/>
            <person name="Lareau L.F."/>
            <person name="Lazarevic D."/>
            <person name="Lipovich L."/>
            <person name="Liu J."/>
            <person name="Liuni S."/>
            <person name="McWilliam S."/>
            <person name="Madan Babu M."/>
            <person name="Madera M."/>
            <person name="Marchionni L."/>
            <person name="Matsuda H."/>
            <person name="Matsuzawa S."/>
            <person name="Miki H."/>
            <person name="Mignone F."/>
            <person name="Miyake S."/>
            <person name="Morris K."/>
            <person name="Mottagui-Tabar S."/>
            <person name="Mulder N."/>
            <person name="Nakano N."/>
            <person name="Nakauchi H."/>
            <person name="Ng P."/>
            <person name="Nilsson R."/>
            <person name="Nishiguchi S."/>
            <person name="Nishikawa S."/>
            <person name="Nori F."/>
            <person name="Ohara O."/>
            <person name="Okazaki Y."/>
            <person name="Orlando V."/>
            <person name="Pang K.C."/>
            <person name="Pavan W.J."/>
            <person name="Pavesi G."/>
            <person name="Pesole G."/>
            <person name="Petrovsky N."/>
            <person name="Piazza S."/>
            <person name="Reed J."/>
            <person name="Reid J.F."/>
            <person name="Ring B.Z."/>
            <person name="Ringwald M."/>
            <person name="Rost B."/>
            <person name="Ruan Y."/>
            <person name="Salzberg S.L."/>
            <person name="Sandelin A."/>
            <person name="Schneider C."/>
            <person name="Schoenbach C."/>
            <person name="Sekiguchi K."/>
            <person name="Semple C.A."/>
            <person name="Seno S."/>
            <person name="Sessa L."/>
            <person name="Sheng Y."/>
            <person name="Shibata Y."/>
            <person name="Shimada H."/>
            <person name="Shimada K."/>
            <person name="Silva D."/>
            <person name="Sinclair B."/>
            <person name="Sperling S."/>
            <person name="Stupka E."/>
            <person name="Sugiura K."/>
            <person name="Sultana R."/>
            <person name="Takenaka Y."/>
            <person name="Taki K."/>
            <person name="Tammoja K."/>
            <person name="Tan S.L."/>
            <person name="Tang S."/>
            <person name="Taylor M.S."/>
            <person name="Tegner J."/>
            <person name="Teichmann S.A."/>
            <person name="Ueda H.R."/>
            <person name="van Nimwegen E."/>
            <person name="Verardo R."/>
            <person name="Wei C.L."/>
            <person name="Yagi K."/>
            <person name="Yamanishi H."/>
            <person name="Zabarovsky E."/>
            <person name="Zhu S."/>
            <person name="Zimmer A."/>
            <person name="Hide W."/>
            <person name="Bult C."/>
            <person name="Grimmond S.M."/>
            <person name="Teasdale R.D."/>
            <person name="Liu E.T."/>
            <person name="Brusic V."/>
            <person name="Quackenbush J."/>
            <person name="Wahlestedt C."/>
            <person name="Mattick J.S."/>
            <person name="Hume D.A."/>
            <person name="Kai C."/>
            <person name="Sasaki D."/>
            <person name="Tomaru Y."/>
            <person name="Fukuda S."/>
            <person name="Kanamori-Katayama M."/>
            <person name="Suzuki M."/>
            <person name="Aoki J."/>
            <person name="Arakawa T."/>
            <person name="Iida J."/>
            <person name="Imamura K."/>
            <person name="Itoh M."/>
            <person name="Kato T."/>
            <person name="Kawaji H."/>
            <person name="Kawagashira N."/>
            <person name="Kawashima T."/>
            <person name="Kojima M."/>
            <person name="Kondo S."/>
            <person name="Konno H."/>
            <person name="Nakano K."/>
            <person name="Ninomiya N."/>
            <person name="Nishio T."/>
            <person name="Okada M."/>
            <person name="Plessy C."/>
            <person name="Shibata K."/>
            <person name="Shiraki T."/>
            <person name="Suzuki S."/>
            <person name="Tagami M."/>
            <person name="Waki K."/>
            <person name="Watahiki A."/>
            <person name="Okamura-Oho Y."/>
            <person name="Suzuki H."/>
            <person name="Kawai J."/>
            <person name="Hayashizaki Y."/>
        </authorList>
    </citation>
    <scope>NUCLEOTIDE SEQUENCE [LARGE SCALE MRNA] (ISOFORMS 2; 3; 4 AND 5)</scope>
    <source>
        <strain>C57BL/6J</strain>
        <strain>NOD</strain>
        <tissue>Lung</tissue>
        <tissue>Olfactory bulb</tissue>
        <tissue>Spleen</tissue>
    </source>
</reference>
<reference key="4">
    <citation type="journal article" date="2004" name="Genome Res.">
        <title>The status, quality, and expansion of the NIH full-length cDNA project: the Mammalian Gene Collection (MGC).</title>
        <authorList>
            <consortium name="The MGC Project Team"/>
        </authorList>
    </citation>
    <scope>NUCLEOTIDE SEQUENCE [LARGE SCALE MRNA] (ISOFORM 2)</scope>
    <source>
        <strain>C57BL/6J</strain>
        <tissue>Embryo</tissue>
    </source>
</reference>
<reference key="5">
    <citation type="journal article" date="2003" name="Mol. Cell. Biol.">
        <title>The methyl-CpG binding protein MBD1 interacts with the p150 subunit of chromatin assembly factor 1.</title>
        <authorList>
            <person name="Reese B.E."/>
            <person name="Bachman K.E."/>
            <person name="Baylin S.B."/>
            <person name="Rountree M.R."/>
        </authorList>
    </citation>
    <scope>SUBCELLULAR LOCATION</scope>
</reference>
<reference key="6">
    <citation type="journal article" date="2004" name="Mol. Cell. Biol.">
        <title>Mbd1 is recruited to both methylated and nonmethylated CpGs via distinct DNA binding domains.</title>
        <authorList>
            <person name="Joergensen H.F."/>
            <person name="Ben-Porath I."/>
            <person name="Bird A.P."/>
        </authorList>
    </citation>
    <scope>FUNCTION</scope>
    <scope>ALTERNATIVE SPLICING</scope>
</reference>
<reference key="7">
    <citation type="journal article" date="2005" name="Exp. Cell Res.">
        <title>The intracellular domain of teneurin-1 interacts with MBD1 and CAP/ponsin resulting in subcellular codistribution and translocation to the nuclear matrix.</title>
        <authorList>
            <person name="Nunes S.M."/>
            <person name="Ferralli J."/>
            <person name="Choi K."/>
            <person name="Brown-Luedi M."/>
            <person name="Minet A.D."/>
            <person name="Chiquet-Ehrismann R."/>
        </authorList>
    </citation>
    <scope>INTERACTION WITH TENM1</scope>
    <scope>SUBCELLULAR LOCATION</scope>
</reference>
<keyword id="KW-0025">Alternative splicing</keyword>
<keyword id="KW-0158">Chromosome</keyword>
<keyword id="KW-0238">DNA-binding</keyword>
<keyword id="KW-1017">Isopeptide bond</keyword>
<keyword id="KW-0479">Metal-binding</keyword>
<keyword id="KW-0539">Nucleus</keyword>
<keyword id="KW-0597">Phosphoprotein</keyword>
<keyword id="KW-1185">Reference proteome</keyword>
<keyword id="KW-0677">Repeat</keyword>
<keyword id="KW-0804">Transcription</keyword>
<keyword id="KW-0805">Transcription regulation</keyword>
<keyword id="KW-0832">Ubl conjugation</keyword>
<keyword id="KW-0862">Zinc</keyword>
<keyword id="KW-0863">Zinc-finger</keyword>
<feature type="chain" id="PRO_0000096259" description="Methyl-CpG-binding domain protein 1">
    <location>
        <begin position="1"/>
        <end position="636"/>
    </location>
</feature>
<feature type="domain" description="MBD" evidence="4">
    <location>
        <begin position="1"/>
        <end position="69"/>
    </location>
</feature>
<feature type="zinc finger region" description="CXXC-type 1" evidence="5">
    <location>
        <begin position="187"/>
        <end position="234"/>
    </location>
</feature>
<feature type="zinc finger region" description="CXXC-type 2" evidence="5">
    <location>
        <begin position="235"/>
        <end position="281"/>
    </location>
</feature>
<feature type="zinc finger region" description="CXXC-type 3" evidence="5">
    <location>
        <begin position="348"/>
        <end position="396"/>
    </location>
</feature>
<feature type="region of interest" description="Disordered" evidence="6">
    <location>
        <begin position="75"/>
        <end position="113"/>
    </location>
</feature>
<feature type="region of interest" description="Disordered" evidence="6">
    <location>
        <begin position="291"/>
        <end position="314"/>
    </location>
</feature>
<feature type="region of interest" description="Disordered" evidence="6">
    <location>
        <begin position="407"/>
        <end position="474"/>
    </location>
</feature>
<feature type="region of interest" description="Disordered" evidence="6">
    <location>
        <begin position="543"/>
        <end position="589"/>
    </location>
</feature>
<feature type="region of interest" description="Transcriptional repression domain (TRD)" evidence="2">
    <location>
        <begin position="550"/>
        <end position="612"/>
    </location>
</feature>
<feature type="short sequence motif" description="Nuclear localization signal" evidence="3">
    <location>
        <begin position="84"/>
        <end position="88"/>
    </location>
</feature>
<feature type="compositionally biased region" description="Basic residues" evidence="6">
    <location>
        <begin position="83"/>
        <end position="97"/>
    </location>
</feature>
<feature type="binding site" evidence="5">
    <location>
        <position position="194"/>
    </location>
    <ligand>
        <name>Zn(2+)</name>
        <dbReference type="ChEBI" id="CHEBI:29105"/>
        <label>1</label>
    </ligand>
</feature>
<feature type="binding site" evidence="5">
    <location>
        <position position="197"/>
    </location>
    <ligand>
        <name>Zn(2+)</name>
        <dbReference type="ChEBI" id="CHEBI:29105"/>
        <label>1</label>
    </ligand>
</feature>
<feature type="binding site" evidence="5">
    <location>
        <position position="200"/>
    </location>
    <ligand>
        <name>Zn(2+)</name>
        <dbReference type="ChEBI" id="CHEBI:29105"/>
        <label>1</label>
    </ligand>
</feature>
<feature type="binding site" evidence="5">
    <location>
        <position position="206"/>
    </location>
    <ligand>
        <name>Zn(2+)</name>
        <dbReference type="ChEBI" id="CHEBI:29105"/>
        <label>2</label>
    </ligand>
</feature>
<feature type="binding site" evidence="5">
    <location>
        <position position="209"/>
    </location>
    <ligand>
        <name>Zn(2+)</name>
        <dbReference type="ChEBI" id="CHEBI:29105"/>
        <label>2</label>
    </ligand>
</feature>
<feature type="binding site" evidence="5">
    <location>
        <position position="212"/>
    </location>
    <ligand>
        <name>Zn(2+)</name>
        <dbReference type="ChEBI" id="CHEBI:29105"/>
        <label>2</label>
    </ligand>
</feature>
<feature type="binding site" evidence="5">
    <location>
        <position position="228"/>
    </location>
    <ligand>
        <name>Zn(2+)</name>
        <dbReference type="ChEBI" id="CHEBI:29105"/>
        <label>2</label>
    </ligand>
</feature>
<feature type="binding site" evidence="5">
    <location>
        <position position="233"/>
    </location>
    <ligand>
        <name>Zn(2+)</name>
        <dbReference type="ChEBI" id="CHEBI:29105"/>
        <label>1</label>
    </ligand>
</feature>
<feature type="binding site" evidence="5">
    <location>
        <position position="243"/>
    </location>
    <ligand>
        <name>Zn(2+)</name>
        <dbReference type="ChEBI" id="CHEBI:29105"/>
        <label>3</label>
    </ligand>
</feature>
<feature type="binding site" evidence="5">
    <location>
        <position position="246"/>
    </location>
    <ligand>
        <name>Zn(2+)</name>
        <dbReference type="ChEBI" id="CHEBI:29105"/>
        <label>3</label>
    </ligand>
</feature>
<feature type="binding site" evidence="5">
    <location>
        <position position="249"/>
    </location>
    <ligand>
        <name>Zn(2+)</name>
        <dbReference type="ChEBI" id="CHEBI:29105"/>
        <label>3</label>
    </ligand>
</feature>
<feature type="binding site" evidence="5">
    <location>
        <position position="255"/>
    </location>
    <ligand>
        <name>Zn(2+)</name>
        <dbReference type="ChEBI" id="CHEBI:29105"/>
        <label>4</label>
    </ligand>
</feature>
<feature type="binding site" evidence="5">
    <location>
        <position position="258"/>
    </location>
    <ligand>
        <name>Zn(2+)</name>
        <dbReference type="ChEBI" id="CHEBI:29105"/>
        <label>4</label>
    </ligand>
</feature>
<feature type="binding site" evidence="5">
    <location>
        <position position="261"/>
    </location>
    <ligand>
        <name>Zn(2+)</name>
        <dbReference type="ChEBI" id="CHEBI:29105"/>
        <label>4</label>
    </ligand>
</feature>
<feature type="binding site" evidence="5">
    <location>
        <position position="275"/>
    </location>
    <ligand>
        <name>Zn(2+)</name>
        <dbReference type="ChEBI" id="CHEBI:29105"/>
        <label>4</label>
    </ligand>
</feature>
<feature type="binding site" evidence="5">
    <location>
        <position position="280"/>
    </location>
    <ligand>
        <name>Zn(2+)</name>
        <dbReference type="ChEBI" id="CHEBI:29105"/>
        <label>3</label>
    </ligand>
</feature>
<feature type="binding site" evidence="5">
    <location>
        <position position="356"/>
    </location>
    <ligand>
        <name>Zn(2+)</name>
        <dbReference type="ChEBI" id="CHEBI:29105"/>
        <label>5</label>
    </ligand>
</feature>
<feature type="binding site" evidence="5">
    <location>
        <position position="359"/>
    </location>
    <ligand>
        <name>Zn(2+)</name>
        <dbReference type="ChEBI" id="CHEBI:29105"/>
        <label>5</label>
    </ligand>
</feature>
<feature type="binding site" evidence="5">
    <location>
        <position position="362"/>
    </location>
    <ligand>
        <name>Zn(2+)</name>
        <dbReference type="ChEBI" id="CHEBI:29105"/>
        <label>5</label>
    </ligand>
</feature>
<feature type="binding site" evidence="5">
    <location>
        <position position="368"/>
    </location>
    <ligand>
        <name>Zn(2+)</name>
        <dbReference type="ChEBI" id="CHEBI:29105"/>
        <label>6</label>
    </ligand>
</feature>
<feature type="binding site" evidence="5">
    <location>
        <position position="371"/>
    </location>
    <ligand>
        <name>Zn(2+)</name>
        <dbReference type="ChEBI" id="CHEBI:29105"/>
        <label>6</label>
    </ligand>
</feature>
<feature type="binding site" evidence="5">
    <location>
        <position position="374"/>
    </location>
    <ligand>
        <name>Zn(2+)</name>
        <dbReference type="ChEBI" id="CHEBI:29105"/>
        <label>6</label>
    </ligand>
</feature>
<feature type="binding site" evidence="5">
    <location>
        <position position="390"/>
    </location>
    <ligand>
        <name>Zn(2+)</name>
        <dbReference type="ChEBI" id="CHEBI:29105"/>
        <label>6</label>
    </ligand>
</feature>
<feature type="binding site" evidence="5">
    <location>
        <position position="395"/>
    </location>
    <ligand>
        <name>Zn(2+)</name>
        <dbReference type="ChEBI" id="CHEBI:29105"/>
        <label>5</label>
    </ligand>
</feature>
<feature type="modified residue" description="Phosphoserine" evidence="2">
    <location>
        <position position="409"/>
    </location>
</feature>
<feature type="cross-link" description="Glycyl lysine isopeptide (Lys-Gly) (interchain with G-Cter in SUMO2)" evidence="2">
    <location>
        <position position="117"/>
    </location>
</feature>
<feature type="cross-link" description="Glycyl lysine isopeptide (Lys-Gly) (interchain with G-Cter in SUMO2)" evidence="2">
    <location>
        <position position="293"/>
    </location>
</feature>
<feature type="cross-link" description="Glycyl lysine isopeptide (Lys-Gly) (interchain with G-Cter in SUMO2)" evidence="2">
    <location>
        <position position="443"/>
    </location>
</feature>
<feature type="cross-link" description="Glycyl lysine isopeptide (Lys-Gly) (interchain with G-Cter in SUMO2)" evidence="2">
    <location>
        <position position="461"/>
    </location>
</feature>
<feature type="cross-link" description="Glycyl lysine isopeptide (Lys-Gly) (interchain with G-Cter in SUMO2); alternate" evidence="2">
    <location>
        <position position="520"/>
    </location>
</feature>
<feature type="cross-link" description="Glycyl lysine isopeptide (Lys-Gly) (interchain with G-Cter in SUMO2); alternate" evidence="2">
    <location>
        <position position="559"/>
    </location>
</feature>
<feature type="splice variant" id="VSP_011072" description="In isoform 2 and isoform 3." evidence="10 11">
    <original>S</original>
    <variation>SSSASASAS</variation>
    <location>
        <position position="142"/>
    </location>
</feature>
<feature type="splice variant" id="VSP_011073" description="In isoform 2, isoform 3, isoform 4 and isoform 5." evidence="10 11">
    <location>
        <begin position="345"/>
        <end position="400"/>
    </location>
</feature>
<feature type="splice variant" id="VSP_011074" description="In isoform 3 and isoform 5." evidence="11">
    <original>LHKLLAVNEKEY</original>
    <variation>SKDLKNPEAKMQ</variation>
    <location>
        <begin position="614"/>
        <end position="625"/>
    </location>
</feature>
<feature type="splice variant" id="VSP_011075" description="In isoform 3 and isoform 5." evidence="11">
    <location>
        <begin position="626"/>
        <end position="636"/>
    </location>
</feature>
<feature type="sequence conflict" description="In Ref. 3; BAB23419 and 4; AAH69837." evidence="12" ref="3 4">
    <original>I</original>
    <variation>R</variation>
    <location>
        <position position="109"/>
    </location>
</feature>
<feature type="sequence conflict" description="In Ref. 4; AAH69837." evidence="12" ref="4">
    <original>H</original>
    <variation>R</variation>
    <location>
        <position position="146"/>
    </location>
</feature>
<feature type="sequence conflict" description="In Ref. 1; AAC68869, 2; AAD48908 and 3; BAE33700." evidence="12" ref="1 2 3">
    <original>R</original>
    <variation>Q</variation>
    <location>
        <position position="457"/>
    </location>
</feature>
<feature type="sequence conflict" description="In Ref. 1; AAC68869, 2; AAD48908 and 3; BAE33700." evidence="12" ref="1 2 3">
    <original>T</original>
    <variation>A</variation>
    <location>
        <position position="484"/>
    </location>
</feature>
<feature type="sequence conflict" description="In Ref. 1; AAC68869, 2; AAD48908 and 3; BAE33700." evidence="12" ref="1 2 3">
    <original>S</original>
    <variation>C</variation>
    <location>
        <position position="497"/>
    </location>
</feature>
<feature type="sequence conflict" description="In Ref. 1; AAC68869, 2; AAD48908 and 3; BAE33700." evidence="12" ref="1 2 3">
    <original>S</original>
    <variation>P</variation>
    <location>
        <position position="556"/>
    </location>
</feature>
<feature type="sequence conflict" description="In Ref. 4; AAH69837." evidence="12" ref="4">
    <original>L</original>
    <variation>F</variation>
    <location>
        <position position="604"/>
    </location>
</feature>
<feature type="sequence conflict" description="In Ref. 4; AAH69837." evidence="12" ref="4">
    <original>S</original>
    <variation>F</variation>
    <location sequence="Q9Z2E2-2">
        <position position="144"/>
    </location>
</feature>
<accession>Q9Z2E2</accession>
<accession>Q3TMA4</accession>
<accession>Q3U101</accession>
<accession>Q6NSW0</accession>
<accession>Q792D6</accession>
<accession>Q8CCL9</accession>
<accession>Q9DC19</accession>
<dbReference type="EMBL" id="AF072240">
    <property type="protein sequence ID" value="AAC68869.1"/>
    <property type="molecule type" value="mRNA"/>
</dbReference>
<dbReference type="EMBL" id="AF120978">
    <property type="protein sequence ID" value="AAD48908.1"/>
    <property type="molecule type" value="Genomic_DNA"/>
</dbReference>
<dbReference type="EMBL" id="AK004624">
    <property type="protein sequence ID" value="BAB23419.1"/>
    <property type="molecule type" value="mRNA"/>
</dbReference>
<dbReference type="EMBL" id="AK032535">
    <property type="protein sequence ID" value="BAC27914.1"/>
    <property type="molecule type" value="mRNA"/>
</dbReference>
<dbReference type="EMBL" id="AK156401">
    <property type="protein sequence ID" value="BAE33700.1"/>
    <property type="molecule type" value="mRNA"/>
</dbReference>
<dbReference type="EMBL" id="AK166042">
    <property type="protein sequence ID" value="BAE38538.1"/>
    <property type="molecule type" value="mRNA"/>
</dbReference>
<dbReference type="EMBL" id="BC069837">
    <property type="protein sequence ID" value="AAH69837.1"/>
    <property type="molecule type" value="mRNA"/>
</dbReference>
<dbReference type="CCDS" id="CCDS50321.1">
    <molecule id="Q9Z2E2-2"/>
</dbReference>
<dbReference type="RefSeq" id="NP_038622.2">
    <property type="nucleotide sequence ID" value="NM_013594.2"/>
</dbReference>
<dbReference type="SMR" id="Q9Z2E2"/>
<dbReference type="BioGRID" id="201330">
    <property type="interactions" value="1"/>
</dbReference>
<dbReference type="FunCoup" id="Q9Z2E2">
    <property type="interactions" value="3726"/>
</dbReference>
<dbReference type="IntAct" id="Q9Z2E2">
    <property type="interactions" value="1"/>
</dbReference>
<dbReference type="MINT" id="Q9Z2E2"/>
<dbReference type="STRING" id="10090.ENSMUSP00000095137"/>
<dbReference type="GlyGen" id="Q9Z2E2">
    <property type="glycosylation" value="1 site"/>
</dbReference>
<dbReference type="iPTMnet" id="Q9Z2E2"/>
<dbReference type="PhosphoSitePlus" id="Q9Z2E2"/>
<dbReference type="jPOST" id="Q9Z2E2"/>
<dbReference type="PeptideAtlas" id="Q9Z2E2"/>
<dbReference type="ProteomicsDB" id="295963">
    <molecule id="Q9Z2E2-1"/>
</dbReference>
<dbReference type="ProteomicsDB" id="295964">
    <molecule id="Q9Z2E2-2"/>
</dbReference>
<dbReference type="ProteomicsDB" id="295965">
    <molecule id="Q9Z2E2-3"/>
</dbReference>
<dbReference type="ProteomicsDB" id="295966">
    <molecule id="Q9Z2E2-4"/>
</dbReference>
<dbReference type="ProteomicsDB" id="295967">
    <molecule id="Q9Z2E2-5"/>
</dbReference>
<dbReference type="DNASU" id="17190"/>
<dbReference type="GeneID" id="17190"/>
<dbReference type="KEGG" id="mmu:17190"/>
<dbReference type="UCSC" id="uc008fpj.2">
    <molecule id="Q9Z2E2-2"/>
    <property type="organism name" value="mouse"/>
</dbReference>
<dbReference type="UCSC" id="uc008fpk.1">
    <molecule id="Q9Z2E2-5"/>
    <property type="organism name" value="mouse"/>
</dbReference>
<dbReference type="UCSC" id="uc012bex.1">
    <molecule id="Q9Z2E2-1"/>
    <property type="organism name" value="mouse"/>
</dbReference>
<dbReference type="AGR" id="MGI:1333811"/>
<dbReference type="CTD" id="4152"/>
<dbReference type="MGI" id="MGI:1333811">
    <property type="gene designation" value="Mbd1"/>
</dbReference>
<dbReference type="InParanoid" id="Q9Z2E2"/>
<dbReference type="PhylomeDB" id="Q9Z2E2"/>
<dbReference type="TreeFam" id="TF350557"/>
<dbReference type="Reactome" id="R-MMU-3899300">
    <property type="pathway name" value="SUMOylation of transcription cofactors"/>
</dbReference>
<dbReference type="BioGRID-ORCS" id="17190">
    <property type="hits" value="5 hits in 82 CRISPR screens"/>
</dbReference>
<dbReference type="ChiTaRS" id="Mbd1">
    <property type="organism name" value="mouse"/>
</dbReference>
<dbReference type="PRO" id="PR:Q9Z2E2"/>
<dbReference type="Proteomes" id="UP000000589">
    <property type="component" value="Unplaced"/>
</dbReference>
<dbReference type="RNAct" id="Q9Z2E2">
    <property type="molecule type" value="protein"/>
</dbReference>
<dbReference type="GO" id="GO:0000785">
    <property type="term" value="C:chromatin"/>
    <property type="evidence" value="ECO:0000314"/>
    <property type="project" value="MGI"/>
</dbReference>
<dbReference type="GO" id="GO:0005737">
    <property type="term" value="C:cytoplasm"/>
    <property type="evidence" value="ECO:0000314"/>
    <property type="project" value="MGI"/>
</dbReference>
<dbReference type="GO" id="GO:0000792">
    <property type="term" value="C:heterochromatin"/>
    <property type="evidence" value="ECO:0000314"/>
    <property type="project" value="MGI"/>
</dbReference>
<dbReference type="GO" id="GO:0016363">
    <property type="term" value="C:nuclear matrix"/>
    <property type="evidence" value="ECO:0000314"/>
    <property type="project" value="UniProtKB"/>
</dbReference>
<dbReference type="GO" id="GO:0016607">
    <property type="term" value="C:nuclear speck"/>
    <property type="evidence" value="ECO:0000314"/>
    <property type="project" value="UniProtKB"/>
</dbReference>
<dbReference type="GO" id="GO:0005634">
    <property type="term" value="C:nucleus"/>
    <property type="evidence" value="ECO:0000314"/>
    <property type="project" value="MGI"/>
</dbReference>
<dbReference type="GO" id="GO:0003677">
    <property type="term" value="F:DNA binding"/>
    <property type="evidence" value="ECO:0000314"/>
    <property type="project" value="MGI"/>
</dbReference>
<dbReference type="GO" id="GO:0010385">
    <property type="term" value="F:double-stranded methylated DNA binding"/>
    <property type="evidence" value="ECO:0000266"/>
    <property type="project" value="MGI"/>
</dbReference>
<dbReference type="GO" id="GO:0045322">
    <property type="term" value="F:unmethylated CpG binding"/>
    <property type="evidence" value="ECO:0000250"/>
    <property type="project" value="UniProtKB"/>
</dbReference>
<dbReference type="GO" id="GO:0008270">
    <property type="term" value="F:zinc ion binding"/>
    <property type="evidence" value="ECO:0000250"/>
    <property type="project" value="UniProtKB"/>
</dbReference>
<dbReference type="CDD" id="cd01396">
    <property type="entry name" value="MeCP2_MBD"/>
    <property type="match status" value="1"/>
</dbReference>
<dbReference type="FunFam" id="3.30.890.10:FF:000001">
    <property type="entry name" value="methyl-CpG-binding domain protein 1 isoform X7"/>
    <property type="match status" value="1"/>
</dbReference>
<dbReference type="Gene3D" id="3.30.890.10">
    <property type="entry name" value="Methyl-cpg-binding Protein 2, Chain A"/>
    <property type="match status" value="1"/>
</dbReference>
<dbReference type="InterPro" id="IPR016177">
    <property type="entry name" value="DNA-bd_dom_sf"/>
</dbReference>
<dbReference type="InterPro" id="IPR001739">
    <property type="entry name" value="Methyl_CpG_DNA-bd"/>
</dbReference>
<dbReference type="InterPro" id="IPR002857">
    <property type="entry name" value="Znf_CXXC"/>
</dbReference>
<dbReference type="PANTHER" id="PTHR12396">
    <property type="entry name" value="METHYL-CPG BINDING PROTEIN, MBD"/>
    <property type="match status" value="1"/>
</dbReference>
<dbReference type="PANTHER" id="PTHR12396:SF57">
    <property type="entry name" value="METHYL-CPG-BINDING DOMAIN PROTEIN 1"/>
    <property type="match status" value="1"/>
</dbReference>
<dbReference type="Pfam" id="PF01429">
    <property type="entry name" value="MBD"/>
    <property type="match status" value="1"/>
</dbReference>
<dbReference type="Pfam" id="PF02008">
    <property type="entry name" value="zf-CXXC"/>
    <property type="match status" value="3"/>
</dbReference>
<dbReference type="SMART" id="SM00391">
    <property type="entry name" value="MBD"/>
    <property type="match status" value="1"/>
</dbReference>
<dbReference type="SUPFAM" id="SSF54171">
    <property type="entry name" value="DNA-binding domain"/>
    <property type="match status" value="1"/>
</dbReference>
<dbReference type="PROSITE" id="PS50982">
    <property type="entry name" value="MBD"/>
    <property type="match status" value="1"/>
</dbReference>
<dbReference type="PROSITE" id="PS51058">
    <property type="entry name" value="ZF_CXXC"/>
    <property type="match status" value="3"/>
</dbReference>